<accession>P34069</accession>
<organism>
    <name type="scientific">Schizosaccharomyces pombe (strain 972 / ATCC 24843)</name>
    <name type="common">Fission yeast</name>
    <dbReference type="NCBI Taxonomy" id="284812"/>
    <lineage>
        <taxon>Eukaryota</taxon>
        <taxon>Fungi</taxon>
        <taxon>Dikarya</taxon>
        <taxon>Ascomycota</taxon>
        <taxon>Taphrinomycotina</taxon>
        <taxon>Schizosaccharomycetes</taxon>
        <taxon>Schizosaccharomycetales</taxon>
        <taxon>Schizosaccharomycetaceae</taxon>
        <taxon>Schizosaccharomyces</taxon>
    </lineage>
</organism>
<dbReference type="EMBL" id="X63628">
    <property type="protein sequence ID" value="CAA45176.1"/>
    <property type="molecule type" value="Genomic_DNA"/>
</dbReference>
<dbReference type="EMBL" id="CU329670">
    <property type="protein sequence ID" value="CAB58726.1"/>
    <property type="molecule type" value="Genomic_DNA"/>
</dbReference>
<dbReference type="PIR" id="S21028">
    <property type="entry name" value="S21028"/>
</dbReference>
<dbReference type="RefSeq" id="NP_593977.1">
    <property type="nucleotide sequence ID" value="NM_001019403.2"/>
</dbReference>
<dbReference type="BioGRID" id="279914">
    <property type="interactions" value="25"/>
</dbReference>
<dbReference type="STRING" id="284812.P34069"/>
<dbReference type="PaxDb" id="4896-SPAC513.03.1"/>
<dbReference type="EnsemblFungi" id="SPAC513.03.1">
    <property type="protein sequence ID" value="SPAC513.03.1:pep"/>
    <property type="gene ID" value="SPAC513.03"/>
</dbReference>
<dbReference type="GeneID" id="2543495"/>
<dbReference type="KEGG" id="spo:2543495"/>
<dbReference type="PomBase" id="SPAC513.03">
    <property type="gene designation" value="mfm2"/>
</dbReference>
<dbReference type="VEuPathDB" id="FungiDB:SPAC513.03"/>
<dbReference type="HOGENOM" id="CLU_3260799_0_0_1"/>
<dbReference type="InParanoid" id="P34069"/>
<dbReference type="PhylomeDB" id="P34069"/>
<dbReference type="PRO" id="PR:P34069"/>
<dbReference type="Proteomes" id="UP000002485">
    <property type="component" value="Chromosome I"/>
</dbReference>
<dbReference type="GO" id="GO:0005829">
    <property type="term" value="C:cytosol"/>
    <property type="evidence" value="ECO:0007005"/>
    <property type="project" value="PomBase"/>
</dbReference>
<dbReference type="GO" id="GO:0005576">
    <property type="term" value="C:extracellular region"/>
    <property type="evidence" value="ECO:0000250"/>
    <property type="project" value="PomBase"/>
</dbReference>
<dbReference type="GO" id="GO:0005634">
    <property type="term" value="C:nucleus"/>
    <property type="evidence" value="ECO:0007005"/>
    <property type="project" value="PomBase"/>
</dbReference>
<dbReference type="GO" id="GO:0000772">
    <property type="term" value="F:mating pheromone activity"/>
    <property type="evidence" value="ECO:0000315"/>
    <property type="project" value="PomBase"/>
</dbReference>
<dbReference type="GO" id="GO:0007267">
    <property type="term" value="P:cell-cell signaling"/>
    <property type="evidence" value="ECO:0000315"/>
    <property type="project" value="PomBase"/>
</dbReference>
<dbReference type="GO" id="GO:0062038">
    <property type="term" value="P:positive regulation of pheromone response MAPK cascade"/>
    <property type="evidence" value="ECO:0000314"/>
    <property type="project" value="PomBase"/>
</dbReference>
<dbReference type="GO" id="GO:0032005">
    <property type="term" value="P:signal transduction involved in positive regulation of conjugation with cellular fusion"/>
    <property type="evidence" value="ECO:0000303"/>
    <property type="project" value="PomBase"/>
</dbReference>
<dbReference type="InterPro" id="IPR005555">
    <property type="entry name" value="M-factor"/>
</dbReference>
<dbReference type="Pfam" id="PF03855">
    <property type="entry name" value="M-factor"/>
    <property type="match status" value="1"/>
</dbReference>
<evidence type="ECO:0000269" key="1">
    <source>
    </source>
</evidence>
<evidence type="ECO:0000305" key="2"/>
<protein>
    <recommendedName>
        <fullName>M-factor</fullName>
    </recommendedName>
</protein>
<feature type="propeptide" id="PRO_0000021710" evidence="1">
    <location>
        <begin position="1"/>
        <end position="32"/>
    </location>
</feature>
<feature type="peptide" id="PRO_0000021711" description="M-factor">
    <location>
        <begin position="33"/>
        <end position="41"/>
    </location>
</feature>
<feature type="propeptide" id="PRO_0000021712" description="Removed in mature form">
    <location>
        <begin position="42"/>
        <end position="44"/>
    </location>
</feature>
<feature type="modified residue" description="Cysteine methyl ester" evidence="1">
    <location>
        <position position="41"/>
    </location>
</feature>
<feature type="lipid moiety-binding region" description="S-farnesyl cysteine" evidence="1">
    <location>
        <position position="41"/>
    </location>
</feature>
<name>MFM2_SCHPO</name>
<gene>
    <name type="primary">mfm2</name>
    <name type="ORF">SPAC513.03</name>
</gene>
<keyword id="KW-0903">Direct protein sequencing</keyword>
<keyword id="KW-0449">Lipoprotein</keyword>
<keyword id="KW-0488">Methylation</keyword>
<keyword id="KW-0588">Pheromone</keyword>
<keyword id="KW-0636">Prenylation</keyword>
<keyword id="KW-1185">Reference proteome</keyword>
<keyword id="KW-0964">Secreted</keyword>
<keyword id="KW-0346">Stress response</keyword>
<comment type="function">
    <text>M-factor is a mating pheromone produced by M-type mating cells. All three mfm genes contribute to the production of M-factor.</text>
</comment>
<comment type="subcellular location">
    <subcellularLocation>
        <location evidence="2">Secreted</location>
    </subcellularLocation>
</comment>
<comment type="induction">
    <text>By nitrogen starvation. It is further induced by a pheromone signal. Its transcription is limited to M cells.</text>
</comment>
<proteinExistence type="evidence at protein level"/>
<reference key="1">
    <citation type="journal article" date="1992" name="EMBO J.">
        <title>Mating pheromones of the fission yeast Schizosaccharomyces pombe: purification and structural characterization of M-factor and isolation and analysis of two genes encoding the pheromone.</title>
        <authorList>
            <person name="Davey J."/>
        </authorList>
    </citation>
    <scope>NUCLEOTIDE SEQUENCE [GENOMIC DNA]</scope>
    <scope>PROTEIN SEQUENCE OF 33-41</scope>
    <scope>ISOPRENYLATION AT CYS-41</scope>
    <scope>METHYLATION AT CYS-41</scope>
</reference>
<reference key="2">
    <citation type="journal article" date="2002" name="Nature">
        <title>The genome sequence of Schizosaccharomyces pombe.</title>
        <authorList>
            <person name="Wood V."/>
            <person name="Gwilliam R."/>
            <person name="Rajandream M.A."/>
            <person name="Lyne M.H."/>
            <person name="Lyne R."/>
            <person name="Stewart A."/>
            <person name="Sgouros J.G."/>
            <person name="Peat N."/>
            <person name="Hayles J."/>
            <person name="Baker S.G."/>
            <person name="Basham D."/>
            <person name="Bowman S."/>
            <person name="Brooks K."/>
            <person name="Brown D."/>
            <person name="Brown S."/>
            <person name="Chillingworth T."/>
            <person name="Churcher C.M."/>
            <person name="Collins M."/>
            <person name="Connor R."/>
            <person name="Cronin A."/>
            <person name="Davis P."/>
            <person name="Feltwell T."/>
            <person name="Fraser A."/>
            <person name="Gentles S."/>
            <person name="Goble A."/>
            <person name="Hamlin N."/>
            <person name="Harris D.E."/>
            <person name="Hidalgo J."/>
            <person name="Hodgson G."/>
            <person name="Holroyd S."/>
            <person name="Hornsby T."/>
            <person name="Howarth S."/>
            <person name="Huckle E.J."/>
            <person name="Hunt S."/>
            <person name="Jagels K."/>
            <person name="James K.D."/>
            <person name="Jones L."/>
            <person name="Jones M."/>
            <person name="Leather S."/>
            <person name="McDonald S."/>
            <person name="McLean J."/>
            <person name="Mooney P."/>
            <person name="Moule S."/>
            <person name="Mungall K.L."/>
            <person name="Murphy L.D."/>
            <person name="Niblett D."/>
            <person name="Odell C."/>
            <person name="Oliver K."/>
            <person name="O'Neil S."/>
            <person name="Pearson D."/>
            <person name="Quail M.A."/>
            <person name="Rabbinowitsch E."/>
            <person name="Rutherford K.M."/>
            <person name="Rutter S."/>
            <person name="Saunders D."/>
            <person name="Seeger K."/>
            <person name="Sharp S."/>
            <person name="Skelton J."/>
            <person name="Simmonds M.N."/>
            <person name="Squares R."/>
            <person name="Squares S."/>
            <person name="Stevens K."/>
            <person name="Taylor K."/>
            <person name="Taylor R.G."/>
            <person name="Tivey A."/>
            <person name="Walsh S.V."/>
            <person name="Warren T."/>
            <person name="Whitehead S."/>
            <person name="Woodward J.R."/>
            <person name="Volckaert G."/>
            <person name="Aert R."/>
            <person name="Robben J."/>
            <person name="Grymonprez B."/>
            <person name="Weltjens I."/>
            <person name="Vanstreels E."/>
            <person name="Rieger M."/>
            <person name="Schaefer M."/>
            <person name="Mueller-Auer S."/>
            <person name="Gabel C."/>
            <person name="Fuchs M."/>
            <person name="Duesterhoeft A."/>
            <person name="Fritzc C."/>
            <person name="Holzer E."/>
            <person name="Moestl D."/>
            <person name="Hilbert H."/>
            <person name="Borzym K."/>
            <person name="Langer I."/>
            <person name="Beck A."/>
            <person name="Lehrach H."/>
            <person name="Reinhardt R."/>
            <person name="Pohl T.M."/>
            <person name="Eger P."/>
            <person name="Zimmermann W."/>
            <person name="Wedler H."/>
            <person name="Wambutt R."/>
            <person name="Purnelle B."/>
            <person name="Goffeau A."/>
            <person name="Cadieu E."/>
            <person name="Dreano S."/>
            <person name="Gloux S."/>
            <person name="Lelaure V."/>
            <person name="Mottier S."/>
            <person name="Galibert F."/>
            <person name="Aves S.J."/>
            <person name="Xiang Z."/>
            <person name="Hunt C."/>
            <person name="Moore K."/>
            <person name="Hurst S.M."/>
            <person name="Lucas M."/>
            <person name="Rochet M."/>
            <person name="Gaillardin C."/>
            <person name="Tallada V.A."/>
            <person name="Garzon A."/>
            <person name="Thode G."/>
            <person name="Daga R.R."/>
            <person name="Cruzado L."/>
            <person name="Jimenez J."/>
            <person name="Sanchez M."/>
            <person name="del Rey F."/>
            <person name="Benito J."/>
            <person name="Dominguez A."/>
            <person name="Revuelta J.L."/>
            <person name="Moreno S."/>
            <person name="Armstrong J."/>
            <person name="Forsburg S.L."/>
            <person name="Cerutti L."/>
            <person name="Lowe T."/>
            <person name="McCombie W.R."/>
            <person name="Paulsen I."/>
            <person name="Potashkin J."/>
            <person name="Shpakovski G.V."/>
            <person name="Ussery D."/>
            <person name="Barrell B.G."/>
            <person name="Nurse P."/>
        </authorList>
    </citation>
    <scope>NUCLEOTIDE SEQUENCE [LARGE SCALE GENOMIC DNA]</scope>
    <source>
        <strain>972 / ATCC 24843</strain>
    </source>
</reference>
<sequence>MDSIATNTHSSSIVNAYNNNPTDVVKTQNIKNYTPKVPYMCVIA</sequence>